<reference key="1">
    <citation type="journal article" date="2003" name="Nature">
        <title>The genome of a motile marine Synechococcus.</title>
        <authorList>
            <person name="Palenik B."/>
            <person name="Brahamsha B."/>
            <person name="Larimer F.W."/>
            <person name="Land M.L."/>
            <person name="Hauser L."/>
            <person name="Chain P."/>
            <person name="Lamerdin J.E."/>
            <person name="Regala W."/>
            <person name="Allen E.E."/>
            <person name="McCarren J."/>
            <person name="Paulsen I.T."/>
            <person name="Dufresne A."/>
            <person name="Partensky F."/>
            <person name="Webb E.A."/>
            <person name="Waterbury J."/>
        </authorList>
    </citation>
    <scope>NUCLEOTIDE SEQUENCE [LARGE SCALE GENOMIC DNA]</scope>
    <source>
        <strain>WH8102</strain>
    </source>
</reference>
<protein>
    <recommendedName>
        <fullName evidence="1">Small ribosomal subunit protein uS3</fullName>
    </recommendedName>
    <alternativeName>
        <fullName evidence="3">30S ribosomal protein S3</fullName>
    </alternativeName>
</protein>
<organism>
    <name type="scientific">Parasynechococcus marenigrum (strain WH8102)</name>
    <dbReference type="NCBI Taxonomy" id="84588"/>
    <lineage>
        <taxon>Bacteria</taxon>
        <taxon>Bacillati</taxon>
        <taxon>Cyanobacteriota</taxon>
        <taxon>Cyanophyceae</taxon>
        <taxon>Synechococcales</taxon>
        <taxon>Prochlorococcaceae</taxon>
        <taxon>Parasynechococcus</taxon>
        <taxon>Parasynechococcus marenigrum</taxon>
    </lineage>
</organism>
<comment type="function">
    <text evidence="1">Binds the lower part of the 30S subunit head. Binds mRNA in the 70S ribosome, positioning it for translation.</text>
</comment>
<comment type="subunit">
    <text evidence="1">Part of the 30S ribosomal subunit. Forms a tight complex with proteins S10 and S14.</text>
</comment>
<comment type="similarity">
    <text evidence="1">Belongs to the universal ribosomal protein uS3 family.</text>
</comment>
<sequence>MGHKINPTGLRLGITQEHRSRWYASSKSYPALLQEDDRIRKFIHKKYGSAGISDVLIARKADQLEVELKTARPGVLVGRQGSGIEELRSGIQKTVGDRSRQVRINVVEVERVDGDAFLLAEYIAQQLEKRVAFRRTIRMAVQRAQRAGVLGLKIQVSGRLNGAEIARTEWTREGRVPLHTLRADIDYATKVASTTYGVLGIKVWVFKGEVLGDEAPLIPVGASPRRRASRRPQQFEDRSNEG</sequence>
<name>RS3_PARMW</name>
<feature type="chain" id="PRO_0000130219" description="Small ribosomal subunit protein uS3">
    <location>
        <begin position="1"/>
        <end position="242"/>
    </location>
</feature>
<feature type="domain" description="KH type-2" evidence="1">
    <location>
        <begin position="39"/>
        <end position="110"/>
    </location>
</feature>
<feature type="region of interest" description="Disordered" evidence="2">
    <location>
        <begin position="221"/>
        <end position="242"/>
    </location>
</feature>
<feature type="compositionally biased region" description="Basic and acidic residues" evidence="2">
    <location>
        <begin position="233"/>
        <end position="242"/>
    </location>
</feature>
<dbReference type="EMBL" id="BX569694">
    <property type="protein sequence ID" value="CAE08588.1"/>
    <property type="molecule type" value="Genomic_DNA"/>
</dbReference>
<dbReference type="RefSeq" id="WP_011128931.1">
    <property type="nucleotide sequence ID" value="NC_005070.1"/>
</dbReference>
<dbReference type="SMR" id="Q7U4J4"/>
<dbReference type="STRING" id="84588.SYNW2073"/>
<dbReference type="KEGG" id="syw:SYNW2073"/>
<dbReference type="eggNOG" id="COG0092">
    <property type="taxonomic scope" value="Bacteria"/>
</dbReference>
<dbReference type="HOGENOM" id="CLU_058591_0_2_3"/>
<dbReference type="Proteomes" id="UP000001422">
    <property type="component" value="Chromosome"/>
</dbReference>
<dbReference type="GO" id="GO:0022627">
    <property type="term" value="C:cytosolic small ribosomal subunit"/>
    <property type="evidence" value="ECO:0007669"/>
    <property type="project" value="TreeGrafter"/>
</dbReference>
<dbReference type="GO" id="GO:0003729">
    <property type="term" value="F:mRNA binding"/>
    <property type="evidence" value="ECO:0007669"/>
    <property type="project" value="UniProtKB-UniRule"/>
</dbReference>
<dbReference type="GO" id="GO:0019843">
    <property type="term" value="F:rRNA binding"/>
    <property type="evidence" value="ECO:0007669"/>
    <property type="project" value="UniProtKB-UniRule"/>
</dbReference>
<dbReference type="GO" id="GO:0003735">
    <property type="term" value="F:structural constituent of ribosome"/>
    <property type="evidence" value="ECO:0007669"/>
    <property type="project" value="InterPro"/>
</dbReference>
<dbReference type="GO" id="GO:0006412">
    <property type="term" value="P:translation"/>
    <property type="evidence" value="ECO:0007669"/>
    <property type="project" value="UniProtKB-UniRule"/>
</dbReference>
<dbReference type="CDD" id="cd02412">
    <property type="entry name" value="KH-II_30S_S3"/>
    <property type="match status" value="1"/>
</dbReference>
<dbReference type="FunFam" id="3.30.300.20:FF:000001">
    <property type="entry name" value="30S ribosomal protein S3"/>
    <property type="match status" value="1"/>
</dbReference>
<dbReference type="Gene3D" id="3.30.300.20">
    <property type="match status" value="1"/>
</dbReference>
<dbReference type="Gene3D" id="3.30.1140.32">
    <property type="entry name" value="Ribosomal protein S3, C-terminal domain"/>
    <property type="match status" value="1"/>
</dbReference>
<dbReference type="HAMAP" id="MF_01309_B">
    <property type="entry name" value="Ribosomal_uS3_B"/>
    <property type="match status" value="1"/>
</dbReference>
<dbReference type="InterPro" id="IPR004087">
    <property type="entry name" value="KH_dom"/>
</dbReference>
<dbReference type="InterPro" id="IPR015946">
    <property type="entry name" value="KH_dom-like_a/b"/>
</dbReference>
<dbReference type="InterPro" id="IPR004044">
    <property type="entry name" value="KH_dom_type_2"/>
</dbReference>
<dbReference type="InterPro" id="IPR009019">
    <property type="entry name" value="KH_sf_prok-type"/>
</dbReference>
<dbReference type="InterPro" id="IPR036419">
    <property type="entry name" value="Ribosomal_S3_C_sf"/>
</dbReference>
<dbReference type="InterPro" id="IPR005704">
    <property type="entry name" value="Ribosomal_uS3_bac-typ"/>
</dbReference>
<dbReference type="InterPro" id="IPR001351">
    <property type="entry name" value="Ribosomal_uS3_C"/>
</dbReference>
<dbReference type="InterPro" id="IPR018280">
    <property type="entry name" value="Ribosomal_uS3_CS"/>
</dbReference>
<dbReference type="NCBIfam" id="TIGR01009">
    <property type="entry name" value="rpsC_bact"/>
    <property type="match status" value="1"/>
</dbReference>
<dbReference type="PANTHER" id="PTHR11760">
    <property type="entry name" value="30S/40S RIBOSOMAL PROTEIN S3"/>
    <property type="match status" value="1"/>
</dbReference>
<dbReference type="PANTHER" id="PTHR11760:SF19">
    <property type="entry name" value="SMALL RIBOSOMAL SUBUNIT PROTEIN US3C"/>
    <property type="match status" value="1"/>
</dbReference>
<dbReference type="Pfam" id="PF07650">
    <property type="entry name" value="KH_2"/>
    <property type="match status" value="1"/>
</dbReference>
<dbReference type="Pfam" id="PF00189">
    <property type="entry name" value="Ribosomal_S3_C"/>
    <property type="match status" value="1"/>
</dbReference>
<dbReference type="SMART" id="SM00322">
    <property type="entry name" value="KH"/>
    <property type="match status" value="1"/>
</dbReference>
<dbReference type="SUPFAM" id="SSF54814">
    <property type="entry name" value="Prokaryotic type KH domain (KH-domain type II)"/>
    <property type="match status" value="1"/>
</dbReference>
<dbReference type="SUPFAM" id="SSF54821">
    <property type="entry name" value="Ribosomal protein S3 C-terminal domain"/>
    <property type="match status" value="1"/>
</dbReference>
<dbReference type="PROSITE" id="PS50823">
    <property type="entry name" value="KH_TYPE_2"/>
    <property type="match status" value="1"/>
</dbReference>
<dbReference type="PROSITE" id="PS00548">
    <property type="entry name" value="RIBOSOMAL_S3"/>
    <property type="match status" value="1"/>
</dbReference>
<accession>Q7U4J4</accession>
<evidence type="ECO:0000255" key="1">
    <source>
        <dbReference type="HAMAP-Rule" id="MF_01309"/>
    </source>
</evidence>
<evidence type="ECO:0000256" key="2">
    <source>
        <dbReference type="SAM" id="MobiDB-lite"/>
    </source>
</evidence>
<evidence type="ECO:0000305" key="3"/>
<gene>
    <name evidence="1" type="primary">rpsC</name>
    <name evidence="1" type="synonym">rps3</name>
    <name type="ordered locus">SYNW2073</name>
</gene>
<proteinExistence type="inferred from homology"/>
<keyword id="KW-0687">Ribonucleoprotein</keyword>
<keyword id="KW-0689">Ribosomal protein</keyword>
<keyword id="KW-0694">RNA-binding</keyword>
<keyword id="KW-0699">rRNA-binding</keyword>